<gene>
    <name evidence="1" type="primary">ctaA</name>
    <name type="ordered locus">A1C_01865</name>
</gene>
<sequence length="337" mass="38433">MRKSLITKWLFVSCIMVIAMVVIGGITRLTGAGLSIVEWRPVTGILPPFSFESWQAEFAKYKAFPEYNSVNYGMTLSEFKCIYLLEFIHRLLGRMTVLIYIVPLIYFYFKDVIKNCDMLPYIIALLLFCVQGFMGWYMVKSGLLNSPSVSHFRLAFHLIIAVIIYHILFYQLIKNRCDILLIPSQTDLKLPLIFSGIAITVIYVQIFLGALVAGLDAGLIYNSFPLMGDHCIPMEIKDNFFNLANLHDPVFIQFIHRLGSYSVFLVVVVLVICLLTIEHPKLNKIAYFLMIALLMQISTGIITLLYSVPIIIASIHQLFAIILLSIIIWCYFLINSS</sequence>
<keyword id="KW-1003">Cell membrane</keyword>
<keyword id="KW-0350">Heme biosynthesis</keyword>
<keyword id="KW-0408">Iron</keyword>
<keyword id="KW-0472">Membrane</keyword>
<keyword id="KW-0479">Metal-binding</keyword>
<keyword id="KW-0560">Oxidoreductase</keyword>
<keyword id="KW-0812">Transmembrane</keyword>
<keyword id="KW-1133">Transmembrane helix</keyword>
<dbReference type="EC" id="1.17.99.9" evidence="1"/>
<dbReference type="EMBL" id="CP000847">
    <property type="protein sequence ID" value="ABV74684.1"/>
    <property type="status" value="ALT_INIT"/>
    <property type="molecule type" value="Genomic_DNA"/>
</dbReference>
<dbReference type="RefSeq" id="WP_041816747.1">
    <property type="nucleotide sequence ID" value="NC_009881.1"/>
</dbReference>
<dbReference type="SMR" id="A8GMQ9"/>
<dbReference type="STRING" id="293614.A1C_01865"/>
<dbReference type="KEGG" id="rak:A1C_01865"/>
<dbReference type="eggNOG" id="COG1612">
    <property type="taxonomic scope" value="Bacteria"/>
</dbReference>
<dbReference type="HOGENOM" id="CLU_017627_0_0_5"/>
<dbReference type="UniPathway" id="UPA00269">
    <property type="reaction ID" value="UER00713"/>
</dbReference>
<dbReference type="Proteomes" id="UP000006830">
    <property type="component" value="Chromosome"/>
</dbReference>
<dbReference type="GO" id="GO:0005886">
    <property type="term" value="C:plasma membrane"/>
    <property type="evidence" value="ECO:0007669"/>
    <property type="project" value="UniProtKB-SubCell"/>
</dbReference>
<dbReference type="GO" id="GO:0046872">
    <property type="term" value="F:metal ion binding"/>
    <property type="evidence" value="ECO:0007669"/>
    <property type="project" value="UniProtKB-KW"/>
</dbReference>
<dbReference type="GO" id="GO:0016653">
    <property type="term" value="F:oxidoreductase activity, acting on NAD(P)H, heme protein as acceptor"/>
    <property type="evidence" value="ECO:0007669"/>
    <property type="project" value="InterPro"/>
</dbReference>
<dbReference type="GO" id="GO:0006784">
    <property type="term" value="P:heme A biosynthetic process"/>
    <property type="evidence" value="ECO:0007669"/>
    <property type="project" value="UniProtKB-UniRule"/>
</dbReference>
<dbReference type="HAMAP" id="MF_01665">
    <property type="entry name" value="HemeA_synth_type2"/>
    <property type="match status" value="1"/>
</dbReference>
<dbReference type="InterPro" id="IPR003780">
    <property type="entry name" value="COX15/CtaA_fam"/>
</dbReference>
<dbReference type="InterPro" id="IPR023754">
    <property type="entry name" value="HemeA_Synthase_type2"/>
</dbReference>
<dbReference type="PANTHER" id="PTHR23289">
    <property type="entry name" value="CYTOCHROME C OXIDASE ASSEMBLY PROTEIN COX15"/>
    <property type="match status" value="1"/>
</dbReference>
<dbReference type="PANTHER" id="PTHR23289:SF2">
    <property type="entry name" value="CYTOCHROME C OXIDASE ASSEMBLY PROTEIN COX15 HOMOLOG"/>
    <property type="match status" value="1"/>
</dbReference>
<dbReference type="Pfam" id="PF02628">
    <property type="entry name" value="COX15-CtaA"/>
    <property type="match status" value="1"/>
</dbReference>
<protein>
    <recommendedName>
        <fullName evidence="1">Heme A synthase</fullName>
        <shortName evidence="1">HAS</shortName>
        <ecNumber evidence="1">1.17.99.9</ecNumber>
    </recommendedName>
    <alternativeName>
        <fullName evidence="1">Cytochrome aa3-controlling protein</fullName>
    </alternativeName>
</protein>
<accession>A8GMQ9</accession>
<name>CTAA_RICAH</name>
<feature type="chain" id="PRO_0000349071" description="Heme A synthase">
    <location>
        <begin position="1"/>
        <end position="337"/>
    </location>
</feature>
<feature type="transmembrane region" description="Helical" evidence="1">
    <location>
        <begin position="6"/>
        <end position="26"/>
    </location>
</feature>
<feature type="transmembrane region" description="Helical" evidence="1">
    <location>
        <begin position="87"/>
        <end position="107"/>
    </location>
</feature>
<feature type="transmembrane region" description="Helical" evidence="1">
    <location>
        <begin position="119"/>
        <end position="139"/>
    </location>
</feature>
<feature type="transmembrane region" description="Helical" evidence="1">
    <location>
        <begin position="154"/>
        <end position="174"/>
    </location>
</feature>
<feature type="transmembrane region" description="Helical" evidence="1">
    <location>
        <begin position="192"/>
        <end position="212"/>
    </location>
</feature>
<feature type="transmembrane region" description="Helical" evidence="1">
    <location>
        <begin position="258"/>
        <end position="278"/>
    </location>
</feature>
<feature type="transmembrane region" description="Helical" evidence="1">
    <location>
        <begin position="285"/>
        <end position="305"/>
    </location>
</feature>
<feature type="transmembrane region" description="Helical" evidence="1">
    <location>
        <begin position="308"/>
        <end position="328"/>
    </location>
</feature>
<feature type="binding site" description="axial binding residue" evidence="1">
    <location>
        <position position="256"/>
    </location>
    <ligand>
        <name>heme</name>
        <dbReference type="ChEBI" id="CHEBI:30413"/>
    </ligand>
    <ligandPart>
        <name>Fe</name>
        <dbReference type="ChEBI" id="CHEBI:18248"/>
    </ligandPart>
</feature>
<feature type="binding site" description="axial binding residue" evidence="1">
    <location>
        <position position="316"/>
    </location>
    <ligand>
        <name>heme</name>
        <dbReference type="ChEBI" id="CHEBI:30413"/>
    </ligand>
    <ligandPart>
        <name>Fe</name>
        <dbReference type="ChEBI" id="CHEBI:18248"/>
    </ligandPart>
</feature>
<evidence type="ECO:0000255" key="1">
    <source>
        <dbReference type="HAMAP-Rule" id="MF_01665"/>
    </source>
</evidence>
<evidence type="ECO:0000305" key="2"/>
<proteinExistence type="inferred from homology"/>
<reference key="1">
    <citation type="submission" date="2007-09" db="EMBL/GenBank/DDBJ databases">
        <title>Complete genome sequence of Rickettsia akari.</title>
        <authorList>
            <person name="Madan A."/>
            <person name="Fahey J."/>
            <person name="Helton E."/>
            <person name="Ketteman M."/>
            <person name="Madan A."/>
            <person name="Rodrigues S."/>
            <person name="Sanchez A."/>
            <person name="Whiting M."/>
            <person name="Dasch G."/>
            <person name="Eremeeva M."/>
        </authorList>
    </citation>
    <scope>NUCLEOTIDE SEQUENCE [LARGE SCALE GENOMIC DNA]</scope>
    <source>
        <strain>Hartford</strain>
    </source>
</reference>
<comment type="function">
    <text evidence="1">Catalyzes the conversion of heme O to heme A by two successive hydroxylations of the methyl group at C8. The first hydroxylation forms heme I, the second hydroxylation results in an unstable dihydroxymethyl group, which spontaneously dehydrates, resulting in the formyl group of heme A.</text>
</comment>
<comment type="catalytic activity">
    <reaction evidence="1">
        <text>Fe(II)-heme o + 2 A + H2O = Fe(II)-heme a + 2 AH2</text>
        <dbReference type="Rhea" id="RHEA:63388"/>
        <dbReference type="ChEBI" id="CHEBI:13193"/>
        <dbReference type="ChEBI" id="CHEBI:15377"/>
        <dbReference type="ChEBI" id="CHEBI:17499"/>
        <dbReference type="ChEBI" id="CHEBI:60530"/>
        <dbReference type="ChEBI" id="CHEBI:61715"/>
        <dbReference type="EC" id="1.17.99.9"/>
    </reaction>
    <physiologicalReaction direction="left-to-right" evidence="1">
        <dbReference type="Rhea" id="RHEA:63389"/>
    </physiologicalReaction>
</comment>
<comment type="cofactor">
    <cofactor evidence="1">
        <name>heme b</name>
        <dbReference type="ChEBI" id="CHEBI:60344"/>
    </cofactor>
</comment>
<comment type="pathway">
    <text evidence="1">Porphyrin-containing compound metabolism; heme A biosynthesis; heme A from heme O: step 1/1.</text>
</comment>
<comment type="subunit">
    <text evidence="1">Interacts with CtaB.</text>
</comment>
<comment type="subcellular location">
    <subcellularLocation>
        <location evidence="1">Cell membrane</location>
        <topology evidence="1">Multi-pass membrane protein</topology>
    </subcellularLocation>
</comment>
<comment type="similarity">
    <text evidence="1">Belongs to the COX15/CtaA family. Type 2 subfamily.</text>
</comment>
<comment type="sequence caution" evidence="2">
    <conflict type="erroneous initiation">
        <sequence resource="EMBL-CDS" id="ABV74684"/>
    </conflict>
</comment>
<organism>
    <name type="scientific">Rickettsia akari (strain Hartford)</name>
    <dbReference type="NCBI Taxonomy" id="293614"/>
    <lineage>
        <taxon>Bacteria</taxon>
        <taxon>Pseudomonadati</taxon>
        <taxon>Pseudomonadota</taxon>
        <taxon>Alphaproteobacteria</taxon>
        <taxon>Rickettsiales</taxon>
        <taxon>Rickettsiaceae</taxon>
        <taxon>Rickettsieae</taxon>
        <taxon>Rickettsia</taxon>
        <taxon>spotted fever group</taxon>
    </lineage>
</organism>